<sequence>MRRRSTEGTVMTDGSKPTFEIGIAMSGAISAGAYSAGVFDFLIQALDAWEKAKAEGAPDLPEYDVRLKALSGASAGAITAAIGVIAAGGREAPATFPSPAPGSQNIRFTLGRLYRSWVTSPTLVSPDGSPDLLSLEDLAGGRPVISVLNANVLTAIGAEALEATGTLSPRAYVASSLHLYMMLSNLRGVPYAIHFNGGQYNMMTHADRVHYVVEGIGTWKPTPSPFADTDSGTSIAATSLFGAAGASTRPPEWLAFANAALASGAFPIGLSPRVIATATSQYAKAKFPISEDQSELRPIPTWPDAWHVSASQDYPFSFVSVDGGLINNDPFEFVRFTLMKDPPRPNERNAEKADRAVIMIAPFPEGPPFLGDGEPPLGVLSIARRVVTALRQQVRFKPDQLLAVAAEGTHSRFMISPHRVPPSTPGGEEREETFSIASGLLGGFGGFVLEAFRDHDYQLGRRNCQYFLMRHLTIDKNHQTLHWPEGAAERRNAVISKTLSDGSMHDYVPIIPLVGDALPEVPYPRWARIDENAFALLVKRIEARLVAVARRLVSTETTSARMKLGLNFLLLVGRNRIVDYIRLTLLQELVMRDQIEGWPLPAADLRPDFVRAVLAALLDPAFDLRTEAGIARTTKLDTSLVREILSTLAGAAGANCQVWLAPWTRTDEPSLYTLVSRRPSFLATLLQGRSPARLFAKPVVDRK</sequence>
<comment type="subcellular location">
    <subcellularLocation>
        <location evidence="3">Cell membrane</location>
        <topology evidence="3">Multi-pass membrane protein</topology>
    </subcellularLocation>
</comment>
<name>Y4II_SINFN</name>
<reference key="1">
    <citation type="journal article" date="1997" name="Nature">
        <title>Molecular basis of symbiosis between Rhizobium and legumes.</title>
        <authorList>
            <person name="Freiberg C.A."/>
            <person name="Fellay R."/>
            <person name="Bairoch A."/>
            <person name="Broughton W.J."/>
            <person name="Rosenthal A."/>
            <person name="Perret X."/>
        </authorList>
    </citation>
    <scope>NUCLEOTIDE SEQUENCE [LARGE SCALE GENOMIC DNA]</scope>
    <source>
        <strain>NBRC 101917 / NGR234</strain>
    </source>
</reference>
<reference key="2">
    <citation type="journal article" date="2009" name="Appl. Environ. Microbiol.">
        <title>Rhizobium sp. strain NGR234 possesses a remarkable number of secretion systems.</title>
        <authorList>
            <person name="Schmeisser C."/>
            <person name="Liesegang H."/>
            <person name="Krysciak D."/>
            <person name="Bakkou N."/>
            <person name="Le Quere A."/>
            <person name="Wollherr A."/>
            <person name="Heinemeyer I."/>
            <person name="Morgenstern B."/>
            <person name="Pommerening-Roeser A."/>
            <person name="Flores M."/>
            <person name="Palacios R."/>
            <person name="Brenner S."/>
            <person name="Gottschalk G."/>
            <person name="Schmitz R.A."/>
            <person name="Broughton W.J."/>
            <person name="Perret X."/>
            <person name="Strittmatter A.W."/>
            <person name="Streit W.R."/>
        </authorList>
    </citation>
    <scope>NUCLEOTIDE SEQUENCE [LARGE SCALE GENOMIC DNA]</scope>
    <source>
        <strain>NBRC 101917 / NGR234</strain>
    </source>
</reference>
<geneLocation type="plasmid">
    <name>sym pNGR234a</name>
</geneLocation>
<gene>
    <name type="ordered locus">NGR_a03240</name>
    <name type="ORF">y4iI</name>
</gene>
<proteinExistence type="predicted"/>
<keyword id="KW-1003">Cell membrane</keyword>
<keyword id="KW-0378">Hydrolase</keyword>
<keyword id="KW-0442">Lipid degradation</keyword>
<keyword id="KW-0443">Lipid metabolism</keyword>
<keyword id="KW-0472">Membrane</keyword>
<keyword id="KW-0614">Plasmid</keyword>
<keyword id="KW-1185">Reference proteome</keyword>
<keyword id="KW-0812">Transmembrane</keyword>
<keyword id="KW-1133">Transmembrane helix</keyword>
<dbReference type="EMBL" id="U00090">
    <property type="protein sequence ID" value="AAB91704.1"/>
    <property type="molecule type" value="Genomic_DNA"/>
</dbReference>
<dbReference type="RefSeq" id="NP_443902.1">
    <property type="nucleotide sequence ID" value="NC_000914.2"/>
</dbReference>
<dbReference type="KEGG" id="rhi:NGR_a03240"/>
<dbReference type="PATRIC" id="fig|394.7.peg.334"/>
<dbReference type="eggNOG" id="COG1752">
    <property type="taxonomic scope" value="Bacteria"/>
</dbReference>
<dbReference type="HOGENOM" id="CLU_021032_0_0_5"/>
<dbReference type="OrthoDB" id="1488362at2"/>
<dbReference type="Proteomes" id="UP000001054">
    <property type="component" value="Plasmid pNGR234a"/>
</dbReference>
<dbReference type="GO" id="GO:0005886">
    <property type="term" value="C:plasma membrane"/>
    <property type="evidence" value="ECO:0007669"/>
    <property type="project" value="UniProtKB-SubCell"/>
</dbReference>
<dbReference type="GO" id="GO:0016787">
    <property type="term" value="F:hydrolase activity"/>
    <property type="evidence" value="ECO:0007669"/>
    <property type="project" value="UniProtKB-KW"/>
</dbReference>
<dbReference type="GO" id="GO:0016042">
    <property type="term" value="P:lipid catabolic process"/>
    <property type="evidence" value="ECO:0007669"/>
    <property type="project" value="UniProtKB-KW"/>
</dbReference>
<dbReference type="InterPro" id="IPR016035">
    <property type="entry name" value="Acyl_Trfase/lysoPLipase"/>
</dbReference>
<dbReference type="InterPro" id="IPR002641">
    <property type="entry name" value="PNPLA_dom"/>
</dbReference>
<dbReference type="SUPFAM" id="SSF52151">
    <property type="entry name" value="FabD/lysophospholipase-like"/>
    <property type="match status" value="1"/>
</dbReference>
<dbReference type="PROSITE" id="PS51635">
    <property type="entry name" value="PNPLA"/>
    <property type="match status" value="1"/>
</dbReference>
<evidence type="ECO:0000255" key="1"/>
<evidence type="ECO:0000255" key="2">
    <source>
        <dbReference type="PROSITE-ProRule" id="PRU01161"/>
    </source>
</evidence>
<evidence type="ECO:0000305" key="3"/>
<feature type="chain" id="PRO_0000200861" description="Uncharacterized protein y4iI">
    <location>
        <begin position="1"/>
        <end position="703"/>
    </location>
</feature>
<feature type="transmembrane region" description="Helical" evidence="1">
    <location>
        <begin position="23"/>
        <end position="43"/>
    </location>
</feature>
<feature type="transmembrane region" description="Helical" evidence="1">
    <location>
        <begin position="69"/>
        <end position="89"/>
    </location>
</feature>
<feature type="transmembrane region" description="Helical" evidence="1">
    <location>
        <begin position="143"/>
        <end position="163"/>
    </location>
</feature>
<feature type="transmembrane region" description="Helical" evidence="1">
    <location>
        <begin position="250"/>
        <end position="270"/>
    </location>
</feature>
<feature type="transmembrane region" description="Helical" evidence="1">
    <location>
        <begin position="357"/>
        <end position="377"/>
    </location>
</feature>
<feature type="transmembrane region" description="Helical" evidence="1">
    <location>
        <begin position="432"/>
        <end position="452"/>
    </location>
</feature>
<feature type="transmembrane region" description="Helical" evidence="1">
    <location>
        <begin position="644"/>
        <end position="664"/>
    </location>
</feature>
<feature type="domain" description="PNPLA" evidence="2">
    <location>
        <begin position="23"/>
        <end position="335"/>
    </location>
</feature>
<feature type="short sequence motif" description="GXSXG" evidence="2">
    <location>
        <begin position="72"/>
        <end position="76"/>
    </location>
</feature>
<feature type="short sequence motif" description="DGA/G" evidence="2">
    <location>
        <begin position="322"/>
        <end position="324"/>
    </location>
</feature>
<feature type="active site" description="Nucleophile" evidence="2">
    <location>
        <position position="74"/>
    </location>
</feature>
<feature type="active site" description="Proton acceptor" evidence="2">
    <location>
        <position position="322"/>
    </location>
</feature>
<protein>
    <recommendedName>
        <fullName>Uncharacterized protein y4iI</fullName>
    </recommendedName>
</protein>
<organism>
    <name type="scientific">Sinorhizobium fredii (strain NBRC 101917 / NGR234)</name>
    <dbReference type="NCBI Taxonomy" id="394"/>
    <lineage>
        <taxon>Bacteria</taxon>
        <taxon>Pseudomonadati</taxon>
        <taxon>Pseudomonadota</taxon>
        <taxon>Alphaproteobacteria</taxon>
        <taxon>Hyphomicrobiales</taxon>
        <taxon>Rhizobiaceae</taxon>
        <taxon>Sinorhizobium/Ensifer group</taxon>
        <taxon>Sinorhizobium</taxon>
    </lineage>
</organism>
<accession>P55492</accession>